<evidence type="ECO:0000250" key="1">
    <source>
        <dbReference type="UniProtKB" id="P23396"/>
    </source>
</evidence>
<evidence type="ECO:0000250" key="2">
    <source>
        <dbReference type="UniProtKB" id="P62908"/>
    </source>
</evidence>
<evidence type="ECO:0000255" key="3">
    <source>
        <dbReference type="PROSITE-ProRule" id="PRU00118"/>
    </source>
</evidence>
<evidence type="ECO:0000256" key="4">
    <source>
        <dbReference type="SAM" id="MobiDB-lite"/>
    </source>
</evidence>
<evidence type="ECO:0000305" key="5"/>
<protein>
    <recommendedName>
        <fullName evidence="5">Small ribosomal subunit protein uS3</fullName>
        <ecNumber evidence="1">4.2.99.18</ecNumber>
    </recommendedName>
    <alternativeName>
        <fullName>40S ribosomal protein S3</fullName>
    </alternativeName>
</protein>
<accession>E2RH47</accession>
<organism>
    <name type="scientific">Canis lupus familiaris</name>
    <name type="common">Dog</name>
    <name type="synonym">Canis familiaris</name>
    <dbReference type="NCBI Taxonomy" id="9615"/>
    <lineage>
        <taxon>Eukaryota</taxon>
        <taxon>Metazoa</taxon>
        <taxon>Chordata</taxon>
        <taxon>Craniata</taxon>
        <taxon>Vertebrata</taxon>
        <taxon>Euteleostomi</taxon>
        <taxon>Mammalia</taxon>
        <taxon>Eutheria</taxon>
        <taxon>Laurasiatheria</taxon>
        <taxon>Carnivora</taxon>
        <taxon>Caniformia</taxon>
        <taxon>Canidae</taxon>
        <taxon>Canis</taxon>
    </lineage>
</organism>
<gene>
    <name type="primary">RPS3</name>
</gene>
<proteinExistence type="evidence at protein level"/>
<sequence>MAVQISKKRKFVADGIFKAELNEFLTRELAEDGYSGVEVRVTPTRTEIIILATRTQNVLGEKGRRIRELTAVVQKRFGFPEGSVELYAEKVATRGLCAIAQAESLRYKLLGGLAVRRACYGVLRFIMESGAKGCEVVVSGKLRGQRAKSMKFVDGLMIHSGDPVNYYVDTAVRHVLLRQGVLGIKVKIMLPWDPSGKIGPKKPLPDHVSIVEPKDEILPTTPISEQKGGKPEPPAMPQPVPTA</sequence>
<comment type="function">
    <text evidence="1">Component of the small ribosomal subunit. The ribosome is a large ribonucleoprotein complex responsible for the synthesis of proteins in the cell. Has endonuclease activity and plays a role in repair of damaged DNA. Cleaves phosphodiester bonds of DNAs containing altered bases with broad specificity and cleaves supercoiled DNA more efficiently than relaxed DNA. Displays high binding affinity for 7,8-dihydro-8-oxoguanine (8-oxoG), a common DNA lesion caused by reactive oxygen species (ROS). Has also been shown to bind with similar affinity to intact and damaged DNA. Stimulates the N-glycosylase activity of the base excision protein OGG1. Enhances the uracil excision activity of UNG1. Also stimulates the cleavage of the phosphodiester backbone by APEX1. When located in the mitochondrion, reduces cellular ROS levels and mitochondrial DNA damage. Has also been shown to negatively regulate DNA repair in cells exposed to hydrogen peroxide. Plays a role in regulating transcription as part of the NF-kappa-B p65-p50 complex where it binds to the RELA/p65 subunit, enhances binding of the complex to DNA and promotes transcription of target genes. Represses its own translation by binding to its cognate mRNA. Binds to and protects TP53/p53 from MDM2-mediated ubiquitination. Involved in spindle formation and chromosome movement during mitosis by regulating microtubule polymerization. Involved in induction of apoptosis through its role in activation of CASP8. Induces neuronal apoptosis by interacting with the E2F1 transcription factor and acting synergistically with it to up-regulate pro-apoptotic proteins BCL2L11/BIM and HRK/Dp5. Interacts with TRADD following exposure to UV radiation and induces apoptosis by caspase-dependent JNK activation.</text>
</comment>
<comment type="catalytic activity">
    <reaction evidence="1">
        <text>2'-deoxyribonucleotide-(2'-deoxyribose 5'-phosphate)-2'-deoxyribonucleotide-DNA = a 3'-end 2'-deoxyribonucleotide-(2,3-dehydro-2,3-deoxyribose 5'-phosphate)-DNA + a 5'-end 5'-phospho-2'-deoxyribonucleoside-DNA + H(+)</text>
        <dbReference type="Rhea" id="RHEA:66592"/>
        <dbReference type="Rhea" id="RHEA-COMP:13180"/>
        <dbReference type="Rhea" id="RHEA-COMP:16897"/>
        <dbReference type="Rhea" id="RHEA-COMP:17067"/>
        <dbReference type="ChEBI" id="CHEBI:15378"/>
        <dbReference type="ChEBI" id="CHEBI:136412"/>
        <dbReference type="ChEBI" id="CHEBI:157695"/>
        <dbReference type="ChEBI" id="CHEBI:167181"/>
        <dbReference type="EC" id="4.2.99.18"/>
    </reaction>
</comment>
<comment type="subunit">
    <text evidence="1 2">Component of the 40S small ribosomal subunit. Identified in a IGF2BP1-dependent mRNP granule complex containing untranslated mRNAs. Interacts with HNRPD. Interacts with PRMT1; the interaction methylates RPS3. Interacts with SUMO1; the interaction sumoylates RPS3. Interacts with UBC9. Interacts with CDK1; the interaction phosphorylates RPS3. Interacts with PRKCD; the interaction phosphorylates RPS3. Interacts with PKB/AKT; the interaction phosphorylates RPS3. Interacts with E2F1; the interaction occurs in the absence of nerve growth factor and increases transcription of pro-apoptotic proteins BCL2L11/BIM and HRK/Dp5. Interacts with the base excision repair proteins APEX1 and OGG1; interaction with OGG1 increases OGG1 N-glycosylase activity. Interacts with UNG; the interaction increases the uracil excision activity of UNG1. Interacts with HSP90; the interaction prevents the ubiquitination and proteasome-dependent degradation of RPS3 and is suppressed by increased ROS levels. Interacts with TOM70; the interaction promotes translocation of RPS3 to the mitochondrion. Interacts (via N-terminus) with RELA (via N-terminus); the interaction enhances the DNA-binding activity of the NF-kappa-B p65-p50 complex. Interacts with NFKBIA; the interaction is direct and may bridge the interaction between RPS3 and RELA. Interacts with IKKB; the interaction phosphorylates RPS3 and enhances its translocation to the nucleus. Interacts (via KH domain) with MDM2 and TP53. Interacts with TRADD. Interacts with CRY1.</text>
</comment>
<comment type="subcellular location">
    <subcellularLocation>
        <location evidence="1">Cytoplasm</location>
    </subcellularLocation>
    <subcellularLocation>
        <location evidence="1">Nucleus</location>
    </subcellularLocation>
    <subcellularLocation>
        <location evidence="1">Nucleus</location>
        <location evidence="1">Nucleolus</location>
    </subcellularLocation>
    <subcellularLocation>
        <location evidence="1">Mitochondrion inner membrane</location>
        <topology evidence="1">Peripheral membrane protein</topology>
    </subcellularLocation>
    <subcellularLocation>
        <location evidence="1">Cytoplasm</location>
        <location evidence="1">Cytoskeleton</location>
        <location evidence="1">Spindle</location>
    </subcellularLocation>
    <text evidence="1 2">In normal cells, located mainly in the cytoplasm with small amounts in the nucleus but translocates to the nucleus in cells undergoing apoptosis. Nuclear translocation is induced by DNA damaging agents such as hydrogen peroxide. Accumulates in the mitochondrion in response to increased ROS levels. Localizes to the spindle during mitosis. Localized in cytoplasmic mRNP granules containing untranslated mRNAs.</text>
</comment>
<comment type="PTM">
    <text evidence="1">Methylation by PRMT1 is required for import into the nucleolus and for ribosome assembly.</text>
</comment>
<comment type="PTM">
    <text evidence="1">Sumoylation by SUMO1 enhances protein stability through increased resistance to proteolysis. Sumoylation occurs at one or more of the three consensus sites, Lys-18, Lys-214 and Lys-230.</text>
</comment>
<comment type="PTM">
    <text evidence="1">Phosphorylation at Thr-221 by CDK1 occurs mainly in G2/M phase. Phosphorylation by PRKCD occurs on a non-ribosomal-associated form which results in translocation of RPS3 to the nucleus and enhances its endonuclease activity. Phosphorylated on Ser-209 by IKKB in response to activation of the NF-kappa-B p65-p50 complex which enhances the association of RPS3 with importin-alpha and mediates the nuclear translocation of RPS3. Phosphorylation by MAPK is required for translocation to the nucleus following exposure of cells to DNA damaging agents such as hydrogen peroxide. Phosphorylation by PKB/AKT mediates RPS3 nuclear translocation, enhances RPS3 endonuclease activity and suppresses RPS3-induced neuronal apoptosis.</text>
</comment>
<comment type="PTM">
    <text evidence="1">Ubiquitinated; ubiquitination is prevented by interaction with HSP90 which stabilizes the protein. Monoubiquitinated at Lys-214 by RNF10 and ZNF598 when a ribosome has stalled during translation of poly(A) sequences, leading to preclude synthesis of a long poly-lysine tail and initiate the ribosome quality control (RQC) pathway to degrade the potentially detrimental aberrant nascent polypeptide. Deubiquitinated at Lys-214 by USP10, preventing degradation by the proteasome and promoting 40S ribosome subunit recycling following ribosome dissociation.</text>
</comment>
<comment type="PTM">
    <text evidence="2">Ufmylated by UFL1.</text>
</comment>
<comment type="similarity">
    <text evidence="5">Belongs to the universal ribosomal protein uS3 family.</text>
</comment>
<feature type="initiator methionine" description="Removed" evidence="1">
    <location>
        <position position="1"/>
    </location>
</feature>
<feature type="chain" id="PRO_0000405584" description="Small ribosomal subunit protein uS3">
    <location>
        <begin position="2"/>
        <end position="243"/>
    </location>
</feature>
<feature type="domain" description="KH type-2" evidence="3">
    <location>
        <begin position="21"/>
        <end position="92"/>
    </location>
</feature>
<feature type="region of interest" description="Disordered" evidence="4">
    <location>
        <begin position="200"/>
        <end position="243"/>
    </location>
</feature>
<feature type="compositionally biased region" description="Pro residues" evidence="4">
    <location>
        <begin position="231"/>
        <end position="243"/>
    </location>
</feature>
<feature type="modified residue" description="N-acetylalanine" evidence="1">
    <location>
        <position position="2"/>
    </location>
</feature>
<feature type="modified residue" description="Phosphoserine; by PKC/PRKCD" evidence="1">
    <location>
        <position position="6"/>
    </location>
</feature>
<feature type="modified residue" description="Phosphoserine" evidence="1">
    <location>
        <position position="35"/>
    </location>
</feature>
<feature type="modified residue" description="Phosphothreonine; by MAPK" evidence="1">
    <location>
        <position position="42"/>
    </location>
</feature>
<feature type="modified residue" description="N6-acetyllysine" evidence="1">
    <location>
        <position position="62"/>
    </location>
</feature>
<feature type="modified residue" description="Asymmetric dimethylarginine; by PRMT1" evidence="1">
    <location>
        <position position="64"/>
    </location>
</feature>
<feature type="modified residue" description="Asymmetric dimethylarginine; by PRMT1" evidence="1">
    <location>
        <position position="65"/>
    </location>
</feature>
<feature type="modified residue" description="Asymmetric dimethylarginine; by PRMT1" evidence="1">
    <location>
        <position position="67"/>
    </location>
</feature>
<feature type="modified residue" description="Phosphothreonine; by PKB" evidence="1">
    <location>
        <position position="70"/>
    </location>
</feature>
<feature type="modified residue" description="Phosphoserine" evidence="1">
    <location>
        <position position="104"/>
    </location>
</feature>
<feature type="modified residue" description="N6-succinyllysine" evidence="2">
    <location>
        <position position="132"/>
    </location>
</feature>
<feature type="modified residue" description="Phosphoserine; by IKKB" evidence="1">
    <location>
        <position position="209"/>
    </location>
</feature>
<feature type="modified residue" description="Phosphothreonine" evidence="1">
    <location>
        <position position="220"/>
    </location>
</feature>
<feature type="modified residue" description="Phosphothreonine; by CDK1 and PKC/PRKCD" evidence="1">
    <location>
        <position position="221"/>
    </location>
</feature>
<feature type="modified residue" description="Phosphoserine" evidence="1">
    <location>
        <position position="224"/>
    </location>
</feature>
<feature type="modified residue" description="Phosphothreonine" evidence="1">
    <location>
        <position position="242"/>
    </location>
</feature>
<feature type="cross-link" description="Glycyl lysine isopeptide (Lys-Gly) (interchain with G-Cter in ubiquitin)" evidence="1">
    <location>
        <position position="90"/>
    </location>
</feature>
<feature type="cross-link" description="Glycyl lysine isopeptide (Lys-Gly) (interchain with G-Cter in ubiquitin)" evidence="1">
    <location>
        <position position="202"/>
    </location>
</feature>
<feature type="cross-link" description="Glycyl lysine isopeptide (Lys-Gly) (interchain with G-Cter in SUMO2); alternate" evidence="1">
    <location>
        <position position="214"/>
    </location>
</feature>
<feature type="cross-link" description="Glycyl lysine isopeptide (Lys-Gly) (interchain with G-Cter in ubiquitin); alternate" evidence="1">
    <location>
        <position position="214"/>
    </location>
</feature>
<feature type="cross-link" description="Glycyl lysine isopeptide (Lys-Gly) (interchain with G-Cter in SUMO2)" evidence="1">
    <location>
        <position position="230"/>
    </location>
</feature>
<keyword id="KW-0002">3D-structure</keyword>
<keyword id="KW-0007">Acetylation</keyword>
<keyword id="KW-0053">Apoptosis</keyword>
<keyword id="KW-0131">Cell cycle</keyword>
<keyword id="KW-0132">Cell division</keyword>
<keyword id="KW-0963">Cytoplasm</keyword>
<keyword id="KW-0206">Cytoskeleton</keyword>
<keyword id="KW-0227">DNA damage</keyword>
<keyword id="KW-0234">DNA repair</keyword>
<keyword id="KW-0238">DNA-binding</keyword>
<keyword id="KW-1017">Isopeptide bond</keyword>
<keyword id="KW-0456">Lyase</keyword>
<keyword id="KW-0472">Membrane</keyword>
<keyword id="KW-0488">Methylation</keyword>
<keyword id="KW-0496">Mitochondrion</keyword>
<keyword id="KW-0999">Mitochondrion inner membrane</keyword>
<keyword id="KW-0498">Mitosis</keyword>
<keyword id="KW-0539">Nucleus</keyword>
<keyword id="KW-0597">Phosphoprotein</keyword>
<keyword id="KW-1185">Reference proteome</keyword>
<keyword id="KW-0687">Ribonucleoprotein</keyword>
<keyword id="KW-0689">Ribosomal protein</keyword>
<keyword id="KW-0694">RNA-binding</keyword>
<keyword id="KW-0804">Transcription</keyword>
<keyword id="KW-0805">Transcription regulation</keyword>
<keyword id="KW-0810">Translation regulation</keyword>
<keyword id="KW-0832">Ubl conjugation</keyword>
<reference key="1">
    <citation type="journal article" date="2005" name="Nature">
        <title>Genome sequence, comparative analysis and haplotype structure of the domestic dog.</title>
        <authorList>
            <person name="Lindblad-Toh K."/>
            <person name="Wade C.M."/>
            <person name="Mikkelsen T.S."/>
            <person name="Karlsson E.K."/>
            <person name="Jaffe D.B."/>
            <person name="Kamal M."/>
            <person name="Clamp M."/>
            <person name="Chang J.L."/>
            <person name="Kulbokas E.J. III"/>
            <person name="Zody M.C."/>
            <person name="Mauceli E."/>
            <person name="Xie X."/>
            <person name="Breen M."/>
            <person name="Wayne R.K."/>
            <person name="Ostrander E.A."/>
            <person name="Ponting C.P."/>
            <person name="Galibert F."/>
            <person name="Smith D.R."/>
            <person name="deJong P.J."/>
            <person name="Kirkness E.F."/>
            <person name="Alvarez P."/>
            <person name="Biagi T."/>
            <person name="Brockman W."/>
            <person name="Butler J."/>
            <person name="Chin C.-W."/>
            <person name="Cook A."/>
            <person name="Cuff J."/>
            <person name="Daly M.J."/>
            <person name="DeCaprio D."/>
            <person name="Gnerre S."/>
            <person name="Grabherr M."/>
            <person name="Kellis M."/>
            <person name="Kleber M."/>
            <person name="Bardeleben C."/>
            <person name="Goodstadt L."/>
            <person name="Heger A."/>
            <person name="Hitte C."/>
            <person name="Kim L."/>
            <person name="Koepfli K.-P."/>
            <person name="Parker H.G."/>
            <person name="Pollinger J.P."/>
            <person name="Searle S.M.J."/>
            <person name="Sutter N.B."/>
            <person name="Thomas R."/>
            <person name="Webber C."/>
            <person name="Baldwin J."/>
            <person name="Abebe A."/>
            <person name="Abouelleil A."/>
            <person name="Aftuck L."/>
            <person name="Ait-Zahra M."/>
            <person name="Aldredge T."/>
            <person name="Allen N."/>
            <person name="An P."/>
            <person name="Anderson S."/>
            <person name="Antoine C."/>
            <person name="Arachchi H."/>
            <person name="Aslam A."/>
            <person name="Ayotte L."/>
            <person name="Bachantsang P."/>
            <person name="Barry A."/>
            <person name="Bayul T."/>
            <person name="Benamara M."/>
            <person name="Berlin A."/>
            <person name="Bessette D."/>
            <person name="Blitshteyn B."/>
            <person name="Bloom T."/>
            <person name="Blye J."/>
            <person name="Boguslavskiy L."/>
            <person name="Bonnet C."/>
            <person name="Boukhgalter B."/>
            <person name="Brown A."/>
            <person name="Cahill P."/>
            <person name="Calixte N."/>
            <person name="Camarata J."/>
            <person name="Cheshatsang Y."/>
            <person name="Chu J."/>
            <person name="Citroen M."/>
            <person name="Collymore A."/>
            <person name="Cooke P."/>
            <person name="Dawoe T."/>
            <person name="Daza R."/>
            <person name="Decktor K."/>
            <person name="DeGray S."/>
            <person name="Dhargay N."/>
            <person name="Dooley K."/>
            <person name="Dooley K."/>
            <person name="Dorje P."/>
            <person name="Dorjee K."/>
            <person name="Dorris L."/>
            <person name="Duffey N."/>
            <person name="Dupes A."/>
            <person name="Egbiremolen O."/>
            <person name="Elong R."/>
            <person name="Falk J."/>
            <person name="Farina A."/>
            <person name="Faro S."/>
            <person name="Ferguson D."/>
            <person name="Ferreira P."/>
            <person name="Fisher S."/>
            <person name="FitzGerald M."/>
            <person name="Foley K."/>
            <person name="Foley C."/>
            <person name="Franke A."/>
            <person name="Friedrich D."/>
            <person name="Gage D."/>
            <person name="Garber M."/>
            <person name="Gearin G."/>
            <person name="Giannoukos G."/>
            <person name="Goode T."/>
            <person name="Goyette A."/>
            <person name="Graham J."/>
            <person name="Grandbois E."/>
            <person name="Gyaltsen K."/>
            <person name="Hafez N."/>
            <person name="Hagopian D."/>
            <person name="Hagos B."/>
            <person name="Hall J."/>
            <person name="Healy C."/>
            <person name="Hegarty R."/>
            <person name="Honan T."/>
            <person name="Horn A."/>
            <person name="Houde N."/>
            <person name="Hughes L."/>
            <person name="Hunnicutt L."/>
            <person name="Husby M."/>
            <person name="Jester B."/>
            <person name="Jones C."/>
            <person name="Kamat A."/>
            <person name="Kanga B."/>
            <person name="Kells C."/>
            <person name="Khazanovich D."/>
            <person name="Kieu A.C."/>
            <person name="Kisner P."/>
            <person name="Kumar M."/>
            <person name="Lance K."/>
            <person name="Landers T."/>
            <person name="Lara M."/>
            <person name="Lee W."/>
            <person name="Leger J.-P."/>
            <person name="Lennon N."/>
            <person name="Leuper L."/>
            <person name="LeVine S."/>
            <person name="Liu J."/>
            <person name="Liu X."/>
            <person name="Lokyitsang Y."/>
            <person name="Lokyitsang T."/>
            <person name="Lui A."/>
            <person name="Macdonald J."/>
            <person name="Major J."/>
            <person name="Marabella R."/>
            <person name="Maru K."/>
            <person name="Matthews C."/>
            <person name="McDonough S."/>
            <person name="Mehta T."/>
            <person name="Meldrim J."/>
            <person name="Melnikov A."/>
            <person name="Meneus L."/>
            <person name="Mihalev A."/>
            <person name="Mihova T."/>
            <person name="Miller K."/>
            <person name="Mittelman R."/>
            <person name="Mlenga V."/>
            <person name="Mulrain L."/>
            <person name="Munson G."/>
            <person name="Navidi A."/>
            <person name="Naylor J."/>
            <person name="Nguyen T."/>
            <person name="Nguyen N."/>
            <person name="Nguyen C."/>
            <person name="Nguyen T."/>
            <person name="Nicol R."/>
            <person name="Norbu N."/>
            <person name="Norbu C."/>
            <person name="Novod N."/>
            <person name="Nyima T."/>
            <person name="Olandt P."/>
            <person name="O'Neill B."/>
            <person name="O'Neill K."/>
            <person name="Osman S."/>
            <person name="Oyono L."/>
            <person name="Patti C."/>
            <person name="Perrin D."/>
            <person name="Phunkhang P."/>
            <person name="Pierre F."/>
            <person name="Priest M."/>
            <person name="Rachupka A."/>
            <person name="Raghuraman S."/>
            <person name="Rameau R."/>
            <person name="Ray V."/>
            <person name="Raymond C."/>
            <person name="Rege F."/>
            <person name="Rise C."/>
            <person name="Rogers J."/>
            <person name="Rogov P."/>
            <person name="Sahalie J."/>
            <person name="Settipalli S."/>
            <person name="Sharpe T."/>
            <person name="Shea T."/>
            <person name="Sheehan M."/>
            <person name="Sherpa N."/>
            <person name="Shi J."/>
            <person name="Shih D."/>
            <person name="Sloan J."/>
            <person name="Smith C."/>
            <person name="Sparrow T."/>
            <person name="Stalker J."/>
            <person name="Stange-Thomann N."/>
            <person name="Stavropoulos S."/>
            <person name="Stone C."/>
            <person name="Stone S."/>
            <person name="Sykes S."/>
            <person name="Tchuinga P."/>
            <person name="Tenzing P."/>
            <person name="Tesfaye S."/>
            <person name="Thoulutsang D."/>
            <person name="Thoulutsang Y."/>
            <person name="Topham K."/>
            <person name="Topping I."/>
            <person name="Tsamla T."/>
            <person name="Vassiliev H."/>
            <person name="Venkataraman V."/>
            <person name="Vo A."/>
            <person name="Wangchuk T."/>
            <person name="Wangdi T."/>
            <person name="Weiand M."/>
            <person name="Wilkinson J."/>
            <person name="Wilson A."/>
            <person name="Yadav S."/>
            <person name="Yang S."/>
            <person name="Yang X."/>
            <person name="Young G."/>
            <person name="Yu Q."/>
            <person name="Zainoun J."/>
            <person name="Zembek L."/>
            <person name="Zimmer A."/>
            <person name="Lander E.S."/>
        </authorList>
    </citation>
    <scope>NUCLEOTIDE SEQUENCE [LARGE SCALE GENOMIC DNA]</scope>
    <source>
        <strain>Boxer</strain>
    </source>
</reference>
<reference key="2">
    <citation type="journal article" date="2008" name="Structure">
        <title>Structure of the mammalian 80S ribosome at 8.7 A resolution.</title>
        <authorList>
            <person name="Chandramouli P."/>
            <person name="Topf M."/>
            <person name="Menetret J.F."/>
            <person name="Eswar N."/>
            <person name="Cannone J.J."/>
            <person name="Gutell R.R."/>
            <person name="Sali A."/>
            <person name="Akey C.W."/>
        </authorList>
    </citation>
    <scope>STRUCTURE BY ELECTRON MICROSCOPY (8.70 ANGSTROMS)</scope>
</reference>
<dbReference type="EC" id="4.2.99.18" evidence="1"/>
<dbReference type="RefSeq" id="NP_001300706.1">
    <property type="nucleotide sequence ID" value="NM_001313777.1"/>
</dbReference>
<dbReference type="PDB" id="4V5Z">
    <property type="method" value="EM"/>
    <property type="resolution" value="8.70 A"/>
    <property type="chains" value="c=1-243"/>
</dbReference>
<dbReference type="PDB" id="6MTD">
    <property type="method" value="EM"/>
    <property type="resolution" value="3.30 A"/>
    <property type="chains" value="DD=1-228"/>
</dbReference>
<dbReference type="PDB" id="6MTE">
    <property type="method" value="EM"/>
    <property type="resolution" value="3.40 A"/>
    <property type="chains" value="DD=1-228"/>
</dbReference>
<dbReference type="PDBsum" id="4V5Z"/>
<dbReference type="PDBsum" id="6MTD"/>
<dbReference type="PDBsum" id="6MTE"/>
<dbReference type="BMRB" id="E2RH47"/>
<dbReference type="EMDB" id="EMD-9240"/>
<dbReference type="EMDB" id="EMD-9242"/>
<dbReference type="SMR" id="E2RH47"/>
<dbReference type="BioGRID" id="142529">
    <property type="interactions" value="1"/>
</dbReference>
<dbReference type="FunCoup" id="E2RH47">
    <property type="interactions" value="1980"/>
</dbReference>
<dbReference type="STRING" id="9615.ENSCAFP00000008052"/>
<dbReference type="PaxDb" id="9612-ENSCAFP00000008052"/>
<dbReference type="Ensembl" id="ENSCAFT00000008686.5">
    <property type="protein sequence ID" value="ENSCAFP00000008052.3"/>
    <property type="gene ID" value="ENSCAFG00000005402.5"/>
</dbReference>
<dbReference type="Ensembl" id="ENSCAFT00030033380.1">
    <property type="protein sequence ID" value="ENSCAFP00030029127.1"/>
    <property type="gene ID" value="ENSCAFG00030018057.1"/>
</dbReference>
<dbReference type="Ensembl" id="ENSCAFT00040031863.1">
    <property type="protein sequence ID" value="ENSCAFP00040027712.1"/>
    <property type="gene ID" value="ENSCAFG00040017211.1"/>
</dbReference>
<dbReference type="Ensembl" id="ENSCAFT00845021062.1">
    <property type="protein sequence ID" value="ENSCAFP00845016559.1"/>
    <property type="gene ID" value="ENSCAFG00845011844.1"/>
</dbReference>
<dbReference type="GeneID" id="476804"/>
<dbReference type="KEGG" id="cfa:476804"/>
<dbReference type="CTD" id="6188"/>
<dbReference type="VEuPathDB" id="HostDB:ENSCAFG00845011844"/>
<dbReference type="VGNC" id="VGNC:45736">
    <property type="gene designation" value="RPS3"/>
</dbReference>
<dbReference type="eggNOG" id="KOG3181">
    <property type="taxonomic scope" value="Eukaryota"/>
</dbReference>
<dbReference type="GeneTree" id="ENSGT00390000008610"/>
<dbReference type="HOGENOM" id="CLU_058591_2_1_1"/>
<dbReference type="InParanoid" id="E2RH47"/>
<dbReference type="OMA" id="NKKKWMI"/>
<dbReference type="OrthoDB" id="10248446at2759"/>
<dbReference type="TreeFam" id="TF300901"/>
<dbReference type="Reactome" id="R-CFA-156827">
    <property type="pathway name" value="L13a-mediated translational silencing of Ceruloplasmin expression"/>
</dbReference>
<dbReference type="Reactome" id="R-CFA-1799339">
    <property type="pathway name" value="SRP-dependent cotranslational protein targeting to membrane"/>
</dbReference>
<dbReference type="Reactome" id="R-CFA-72649">
    <property type="pathway name" value="Translation initiation complex formation"/>
</dbReference>
<dbReference type="Reactome" id="R-CFA-72689">
    <property type="pathway name" value="Formation of a pool of free 40S subunits"/>
</dbReference>
<dbReference type="Reactome" id="R-CFA-72695">
    <property type="pathway name" value="Formation of the ternary complex, and subsequently, the 43S complex"/>
</dbReference>
<dbReference type="Reactome" id="R-CFA-72702">
    <property type="pathway name" value="Ribosomal scanning and start codon recognition"/>
</dbReference>
<dbReference type="Reactome" id="R-CFA-72706">
    <property type="pathway name" value="GTP hydrolysis and joining of the 60S ribosomal subunit"/>
</dbReference>
<dbReference type="Reactome" id="R-CFA-975956">
    <property type="pathway name" value="Nonsense Mediated Decay (NMD) independent of the Exon Junction Complex (EJC)"/>
</dbReference>
<dbReference type="Reactome" id="R-CFA-975957">
    <property type="pathway name" value="Nonsense Mediated Decay (NMD) enhanced by the Exon Junction Complex (EJC)"/>
</dbReference>
<dbReference type="Proteomes" id="UP000002254">
    <property type="component" value="Chromosome 21"/>
</dbReference>
<dbReference type="Proteomes" id="UP000694429">
    <property type="component" value="Chromosome 21"/>
</dbReference>
<dbReference type="Proteomes" id="UP000694542">
    <property type="component" value="Chromosome 21"/>
</dbReference>
<dbReference type="Proteomes" id="UP000805418">
    <property type="component" value="Chromosome 21"/>
</dbReference>
<dbReference type="Bgee" id="ENSCAFG00000005402">
    <property type="expression patterns" value="Expressed in lymph node and 49 other cell types or tissues"/>
</dbReference>
<dbReference type="GO" id="GO:0022627">
    <property type="term" value="C:cytosolic small ribosomal subunit"/>
    <property type="evidence" value="ECO:0000318"/>
    <property type="project" value="GO_Central"/>
</dbReference>
<dbReference type="GO" id="GO:0005743">
    <property type="term" value="C:mitochondrial inner membrane"/>
    <property type="evidence" value="ECO:0007669"/>
    <property type="project" value="UniProtKB-SubCell"/>
</dbReference>
<dbReference type="GO" id="GO:0005730">
    <property type="term" value="C:nucleolus"/>
    <property type="evidence" value="ECO:0007669"/>
    <property type="project" value="UniProtKB-SubCell"/>
</dbReference>
<dbReference type="GO" id="GO:0005634">
    <property type="term" value="C:nucleus"/>
    <property type="evidence" value="ECO:0000318"/>
    <property type="project" value="GO_Central"/>
</dbReference>
<dbReference type="GO" id="GO:0005819">
    <property type="term" value="C:spindle"/>
    <property type="evidence" value="ECO:0007669"/>
    <property type="project" value="UniProtKB-SubCell"/>
</dbReference>
<dbReference type="GO" id="GO:0140078">
    <property type="term" value="F:class I DNA-(apurinic or apyrimidinic site) endonuclease activity"/>
    <property type="evidence" value="ECO:0007669"/>
    <property type="project" value="UniProtKB-EC"/>
</dbReference>
<dbReference type="GO" id="GO:0003677">
    <property type="term" value="F:DNA binding"/>
    <property type="evidence" value="ECO:0007669"/>
    <property type="project" value="UniProtKB-KW"/>
</dbReference>
<dbReference type="GO" id="GO:0003723">
    <property type="term" value="F:RNA binding"/>
    <property type="evidence" value="ECO:0007669"/>
    <property type="project" value="UniProtKB-KW"/>
</dbReference>
<dbReference type="GO" id="GO:0003735">
    <property type="term" value="F:structural constituent of ribosome"/>
    <property type="evidence" value="ECO:0000318"/>
    <property type="project" value="GO_Central"/>
</dbReference>
<dbReference type="GO" id="GO:0006915">
    <property type="term" value="P:apoptotic process"/>
    <property type="evidence" value="ECO:0007669"/>
    <property type="project" value="UniProtKB-KW"/>
</dbReference>
<dbReference type="GO" id="GO:0051301">
    <property type="term" value="P:cell division"/>
    <property type="evidence" value="ECO:0007669"/>
    <property type="project" value="UniProtKB-KW"/>
</dbReference>
<dbReference type="GO" id="GO:0006281">
    <property type="term" value="P:DNA repair"/>
    <property type="evidence" value="ECO:0007669"/>
    <property type="project" value="UniProtKB-KW"/>
</dbReference>
<dbReference type="GO" id="GO:2001235">
    <property type="term" value="P:positive regulation of apoptotic signaling pathway"/>
    <property type="evidence" value="ECO:0000318"/>
    <property type="project" value="GO_Central"/>
</dbReference>
<dbReference type="GO" id="GO:0006417">
    <property type="term" value="P:regulation of translation"/>
    <property type="evidence" value="ECO:0007669"/>
    <property type="project" value="UniProtKB-KW"/>
</dbReference>
<dbReference type="GO" id="GO:0006412">
    <property type="term" value="P:translation"/>
    <property type="evidence" value="ECO:0007669"/>
    <property type="project" value="InterPro"/>
</dbReference>
<dbReference type="CDD" id="cd02413">
    <property type="entry name" value="KH-II_40S_S3"/>
    <property type="match status" value="1"/>
</dbReference>
<dbReference type="FunFam" id="3.30.1140.32:FF:000005">
    <property type="entry name" value="40S ribosomal protein S3"/>
    <property type="match status" value="1"/>
</dbReference>
<dbReference type="FunFam" id="3.30.300.20:FF:000006">
    <property type="entry name" value="40S ribosomal protein S3"/>
    <property type="match status" value="1"/>
</dbReference>
<dbReference type="Gene3D" id="3.30.300.20">
    <property type="match status" value="1"/>
</dbReference>
<dbReference type="Gene3D" id="3.30.1140.32">
    <property type="entry name" value="Ribosomal protein S3, C-terminal domain"/>
    <property type="match status" value="1"/>
</dbReference>
<dbReference type="InterPro" id="IPR015946">
    <property type="entry name" value="KH_dom-like_a/b"/>
</dbReference>
<dbReference type="InterPro" id="IPR004044">
    <property type="entry name" value="KH_dom_type_2"/>
</dbReference>
<dbReference type="InterPro" id="IPR009019">
    <property type="entry name" value="KH_sf_prok-type"/>
</dbReference>
<dbReference type="InterPro" id="IPR036419">
    <property type="entry name" value="Ribosomal_S3_C_sf"/>
</dbReference>
<dbReference type="InterPro" id="IPR001351">
    <property type="entry name" value="Ribosomal_uS3_C"/>
</dbReference>
<dbReference type="InterPro" id="IPR018280">
    <property type="entry name" value="Ribosomal_uS3_CS"/>
</dbReference>
<dbReference type="InterPro" id="IPR005703">
    <property type="entry name" value="Ribosomal_uS3_euk/arc"/>
</dbReference>
<dbReference type="NCBIfam" id="NF003219">
    <property type="entry name" value="PRK04191.1"/>
    <property type="match status" value="1"/>
</dbReference>
<dbReference type="NCBIfam" id="TIGR01008">
    <property type="entry name" value="uS3_euk_arch"/>
    <property type="match status" value="1"/>
</dbReference>
<dbReference type="PANTHER" id="PTHR11760">
    <property type="entry name" value="30S/40S RIBOSOMAL PROTEIN S3"/>
    <property type="match status" value="1"/>
</dbReference>
<dbReference type="PANTHER" id="PTHR11760:SF32">
    <property type="entry name" value="SMALL RIBOSOMAL SUBUNIT PROTEIN US3"/>
    <property type="match status" value="1"/>
</dbReference>
<dbReference type="Pfam" id="PF07650">
    <property type="entry name" value="KH_2"/>
    <property type="match status" value="1"/>
</dbReference>
<dbReference type="Pfam" id="PF00189">
    <property type="entry name" value="Ribosomal_S3_C"/>
    <property type="match status" value="1"/>
</dbReference>
<dbReference type="SUPFAM" id="SSF54814">
    <property type="entry name" value="Prokaryotic type KH domain (KH-domain type II)"/>
    <property type="match status" value="1"/>
</dbReference>
<dbReference type="SUPFAM" id="SSF54821">
    <property type="entry name" value="Ribosomal protein S3 C-terminal domain"/>
    <property type="match status" value="1"/>
</dbReference>
<dbReference type="PROSITE" id="PS50823">
    <property type="entry name" value="KH_TYPE_2"/>
    <property type="match status" value="1"/>
</dbReference>
<dbReference type="PROSITE" id="PS00548">
    <property type="entry name" value="RIBOSOMAL_S3"/>
    <property type="match status" value="1"/>
</dbReference>
<name>RS3_CANLF</name>